<keyword id="KW-0342">GTP-binding</keyword>
<keyword id="KW-0378">Hydrolase</keyword>
<keyword id="KW-0456">Lyase</keyword>
<keyword id="KW-0460">Magnesium</keyword>
<keyword id="KW-0464">Manganese</keyword>
<keyword id="KW-0479">Metal-binding</keyword>
<keyword id="KW-0511">Multifunctional enzyme</keyword>
<keyword id="KW-0547">Nucleotide-binding</keyword>
<keyword id="KW-0686">Riboflavin biosynthesis</keyword>
<keyword id="KW-0862">Zinc</keyword>
<comment type="function">
    <text evidence="1">Catalyzes the conversion of D-ribulose 5-phosphate to formate and 3,4-dihydroxy-2-butanone 4-phosphate.</text>
</comment>
<comment type="function">
    <text evidence="1">Catalyzes the conversion of GTP to 2,5-diamino-6-ribosylamino-4(3H)-pyrimidinone 5'-phosphate (DARP), formate and pyrophosphate.</text>
</comment>
<comment type="catalytic activity">
    <reaction evidence="1">
        <text>D-ribulose 5-phosphate = (2S)-2-hydroxy-3-oxobutyl phosphate + formate + H(+)</text>
        <dbReference type="Rhea" id="RHEA:18457"/>
        <dbReference type="ChEBI" id="CHEBI:15378"/>
        <dbReference type="ChEBI" id="CHEBI:15740"/>
        <dbReference type="ChEBI" id="CHEBI:58121"/>
        <dbReference type="ChEBI" id="CHEBI:58830"/>
        <dbReference type="EC" id="4.1.99.12"/>
    </reaction>
</comment>
<comment type="catalytic activity">
    <reaction evidence="1">
        <text>GTP + 4 H2O = 2,5-diamino-6-hydroxy-4-(5-phosphoribosylamino)-pyrimidine + formate + 2 phosphate + 3 H(+)</text>
        <dbReference type="Rhea" id="RHEA:23704"/>
        <dbReference type="ChEBI" id="CHEBI:15377"/>
        <dbReference type="ChEBI" id="CHEBI:15378"/>
        <dbReference type="ChEBI" id="CHEBI:15740"/>
        <dbReference type="ChEBI" id="CHEBI:37565"/>
        <dbReference type="ChEBI" id="CHEBI:43474"/>
        <dbReference type="ChEBI" id="CHEBI:58614"/>
        <dbReference type="EC" id="3.5.4.25"/>
    </reaction>
</comment>
<comment type="cofactor">
    <cofactor evidence="1">
        <name>Mg(2+)</name>
        <dbReference type="ChEBI" id="CHEBI:18420"/>
    </cofactor>
    <cofactor evidence="1">
        <name>Mn(2+)</name>
        <dbReference type="ChEBI" id="CHEBI:29035"/>
    </cofactor>
    <text evidence="1">Binds 2 divalent metal cations per subunit. Magnesium or manganese.</text>
</comment>
<comment type="cofactor">
    <cofactor evidence="1">
        <name>Zn(2+)</name>
        <dbReference type="ChEBI" id="CHEBI:29105"/>
    </cofactor>
    <text evidence="1">Binds 1 zinc ion per subunit.</text>
</comment>
<comment type="pathway">
    <text evidence="1">Cofactor biosynthesis; riboflavin biosynthesis; 2-hydroxy-3-oxobutyl phosphate from D-ribulose 5-phosphate: step 1/1.</text>
</comment>
<comment type="pathway">
    <text evidence="1">Cofactor biosynthesis; riboflavin biosynthesis; 5-amino-6-(D-ribitylamino)uracil from GTP: step 1/4.</text>
</comment>
<comment type="similarity">
    <text evidence="1">In the N-terminal section; belongs to the DHBP synthase family.</text>
</comment>
<comment type="similarity">
    <text evidence="1">In the C-terminal section; belongs to the GTP cyclohydrolase II family.</text>
</comment>
<feature type="chain" id="PRO_1000140358" description="Riboflavin biosynthesis protein RibBA">
    <location>
        <begin position="1"/>
        <end position="401"/>
    </location>
</feature>
<feature type="region of interest" description="DHBP synthase">
    <location>
        <begin position="1"/>
        <end position="203"/>
    </location>
</feature>
<feature type="region of interest" description="GTP cyclohydrolase II">
    <location>
        <begin position="204"/>
        <end position="401"/>
    </location>
</feature>
<feature type="active site" description="Proton acceptor; for GTP cyclohydrolase activity" evidence="1">
    <location>
        <position position="331"/>
    </location>
</feature>
<feature type="active site" description="Nucleophile; for GTP cyclohydrolase activity" evidence="1">
    <location>
        <position position="333"/>
    </location>
</feature>
<feature type="binding site" evidence="1">
    <location>
        <begin position="30"/>
        <end position="31"/>
    </location>
    <ligand>
        <name>D-ribulose 5-phosphate</name>
        <dbReference type="ChEBI" id="CHEBI:58121"/>
    </ligand>
</feature>
<feature type="binding site" evidence="1">
    <location>
        <position position="31"/>
    </location>
    <ligand>
        <name>Mg(2+)</name>
        <dbReference type="ChEBI" id="CHEBI:18420"/>
        <label>1</label>
    </ligand>
</feature>
<feature type="binding site" evidence="1">
    <location>
        <position position="31"/>
    </location>
    <ligand>
        <name>Mg(2+)</name>
        <dbReference type="ChEBI" id="CHEBI:18420"/>
        <label>2</label>
    </ligand>
</feature>
<feature type="binding site" evidence="1">
    <location>
        <position position="35"/>
    </location>
    <ligand>
        <name>D-ribulose 5-phosphate</name>
        <dbReference type="ChEBI" id="CHEBI:58121"/>
    </ligand>
</feature>
<feature type="binding site" evidence="1">
    <location>
        <begin position="142"/>
        <end position="146"/>
    </location>
    <ligand>
        <name>D-ribulose 5-phosphate</name>
        <dbReference type="ChEBI" id="CHEBI:58121"/>
    </ligand>
</feature>
<feature type="binding site" evidence="1">
    <location>
        <position position="145"/>
    </location>
    <ligand>
        <name>Mg(2+)</name>
        <dbReference type="ChEBI" id="CHEBI:18420"/>
        <label>2</label>
    </ligand>
</feature>
<feature type="binding site" evidence="1">
    <location>
        <position position="166"/>
    </location>
    <ligand>
        <name>D-ribulose 5-phosphate</name>
        <dbReference type="ChEBI" id="CHEBI:58121"/>
    </ligand>
</feature>
<feature type="binding site" evidence="1">
    <location>
        <begin position="254"/>
        <end position="258"/>
    </location>
    <ligand>
        <name>GTP</name>
        <dbReference type="ChEBI" id="CHEBI:37565"/>
    </ligand>
</feature>
<feature type="binding site" evidence="1">
    <location>
        <position position="259"/>
    </location>
    <ligand>
        <name>Zn(2+)</name>
        <dbReference type="ChEBI" id="CHEBI:29105"/>
        <note>catalytic</note>
    </ligand>
</feature>
<feature type="binding site" evidence="1">
    <location>
        <position position="270"/>
    </location>
    <ligand>
        <name>Zn(2+)</name>
        <dbReference type="ChEBI" id="CHEBI:29105"/>
        <note>catalytic</note>
    </ligand>
</feature>
<feature type="binding site" evidence="1">
    <location>
        <position position="272"/>
    </location>
    <ligand>
        <name>Zn(2+)</name>
        <dbReference type="ChEBI" id="CHEBI:29105"/>
        <note>catalytic</note>
    </ligand>
</feature>
<feature type="binding site" evidence="1">
    <location>
        <position position="275"/>
    </location>
    <ligand>
        <name>GTP</name>
        <dbReference type="ChEBI" id="CHEBI:37565"/>
    </ligand>
</feature>
<feature type="binding site" evidence="1">
    <location>
        <begin position="297"/>
        <end position="299"/>
    </location>
    <ligand>
        <name>GTP</name>
        <dbReference type="ChEBI" id="CHEBI:37565"/>
    </ligand>
</feature>
<feature type="binding site" evidence="1">
    <location>
        <position position="319"/>
    </location>
    <ligand>
        <name>GTP</name>
        <dbReference type="ChEBI" id="CHEBI:37565"/>
    </ligand>
</feature>
<feature type="binding site" evidence="1">
    <location>
        <position position="354"/>
    </location>
    <ligand>
        <name>GTP</name>
        <dbReference type="ChEBI" id="CHEBI:37565"/>
    </ligand>
</feature>
<feature type="binding site" evidence="1">
    <location>
        <position position="359"/>
    </location>
    <ligand>
        <name>GTP</name>
        <dbReference type="ChEBI" id="CHEBI:37565"/>
    </ligand>
</feature>
<feature type="site" description="Essential for DHBP synthase activity" evidence="1">
    <location>
        <position position="128"/>
    </location>
</feature>
<feature type="site" description="Essential for DHBP synthase activity" evidence="1">
    <location>
        <position position="166"/>
    </location>
</feature>
<protein>
    <recommendedName>
        <fullName evidence="1">Riboflavin biosynthesis protein RibBA</fullName>
    </recommendedName>
    <domain>
        <recommendedName>
            <fullName evidence="1">3,4-dihydroxy-2-butanone 4-phosphate synthase</fullName>
            <shortName evidence="1">DHBP synthase</shortName>
            <ecNumber evidence="1">4.1.99.12</ecNumber>
        </recommendedName>
    </domain>
    <domain>
        <recommendedName>
            <fullName evidence="1">GTP cyclohydrolase-2</fullName>
            <ecNumber evidence="1">3.5.4.25</ecNumber>
        </recommendedName>
        <alternativeName>
            <fullName evidence="1">GTP cyclohydrolase II</fullName>
        </alternativeName>
    </domain>
</protein>
<gene>
    <name evidence="1" type="primary">ribBA</name>
    <name type="ordered locus">APP7_0408</name>
</gene>
<dbReference type="EC" id="4.1.99.12" evidence="1"/>
<dbReference type="EC" id="3.5.4.25" evidence="1"/>
<dbReference type="EMBL" id="CP001091">
    <property type="protein sequence ID" value="ACE61060.1"/>
    <property type="molecule type" value="Genomic_DNA"/>
</dbReference>
<dbReference type="RefSeq" id="WP_005603681.1">
    <property type="nucleotide sequence ID" value="NC_010939.1"/>
</dbReference>
<dbReference type="SMR" id="B3H0P8"/>
<dbReference type="KEGG" id="apa:APP7_0408"/>
<dbReference type="HOGENOM" id="CLU_020273_1_2_6"/>
<dbReference type="UniPathway" id="UPA00275">
    <property type="reaction ID" value="UER00399"/>
</dbReference>
<dbReference type="UniPathway" id="UPA00275">
    <property type="reaction ID" value="UER00400"/>
</dbReference>
<dbReference type="Proteomes" id="UP000001226">
    <property type="component" value="Chromosome"/>
</dbReference>
<dbReference type="GO" id="GO:0005829">
    <property type="term" value="C:cytosol"/>
    <property type="evidence" value="ECO:0007669"/>
    <property type="project" value="TreeGrafter"/>
</dbReference>
<dbReference type="GO" id="GO:0008686">
    <property type="term" value="F:3,4-dihydroxy-2-butanone-4-phosphate synthase activity"/>
    <property type="evidence" value="ECO:0007669"/>
    <property type="project" value="UniProtKB-UniRule"/>
</dbReference>
<dbReference type="GO" id="GO:0005525">
    <property type="term" value="F:GTP binding"/>
    <property type="evidence" value="ECO:0007669"/>
    <property type="project" value="UniProtKB-KW"/>
</dbReference>
<dbReference type="GO" id="GO:0003935">
    <property type="term" value="F:GTP cyclohydrolase II activity"/>
    <property type="evidence" value="ECO:0007669"/>
    <property type="project" value="UniProtKB-UniRule"/>
</dbReference>
<dbReference type="GO" id="GO:0000287">
    <property type="term" value="F:magnesium ion binding"/>
    <property type="evidence" value="ECO:0007669"/>
    <property type="project" value="UniProtKB-UniRule"/>
</dbReference>
<dbReference type="GO" id="GO:0030145">
    <property type="term" value="F:manganese ion binding"/>
    <property type="evidence" value="ECO:0007669"/>
    <property type="project" value="UniProtKB-UniRule"/>
</dbReference>
<dbReference type="GO" id="GO:0008270">
    <property type="term" value="F:zinc ion binding"/>
    <property type="evidence" value="ECO:0007669"/>
    <property type="project" value="UniProtKB-UniRule"/>
</dbReference>
<dbReference type="GO" id="GO:0009231">
    <property type="term" value="P:riboflavin biosynthetic process"/>
    <property type="evidence" value="ECO:0007669"/>
    <property type="project" value="UniProtKB-UniRule"/>
</dbReference>
<dbReference type="CDD" id="cd00641">
    <property type="entry name" value="GTP_cyclohydro2"/>
    <property type="match status" value="1"/>
</dbReference>
<dbReference type="FunFam" id="3.40.50.10990:FF:000002">
    <property type="entry name" value="GTP cyclohydrolase-2"/>
    <property type="match status" value="1"/>
</dbReference>
<dbReference type="FunFam" id="3.90.870.10:FF:000001">
    <property type="entry name" value="Riboflavin biosynthesis protein RibBA"/>
    <property type="match status" value="1"/>
</dbReference>
<dbReference type="Gene3D" id="3.90.870.10">
    <property type="entry name" value="DHBP synthase"/>
    <property type="match status" value="1"/>
</dbReference>
<dbReference type="Gene3D" id="3.40.50.10990">
    <property type="entry name" value="GTP cyclohydrolase II"/>
    <property type="match status" value="1"/>
</dbReference>
<dbReference type="HAMAP" id="MF_00179">
    <property type="entry name" value="RibA"/>
    <property type="match status" value="1"/>
</dbReference>
<dbReference type="HAMAP" id="MF_00180">
    <property type="entry name" value="RibB"/>
    <property type="match status" value="1"/>
</dbReference>
<dbReference type="HAMAP" id="MF_01283">
    <property type="entry name" value="RibBA"/>
    <property type="match status" value="1"/>
</dbReference>
<dbReference type="InterPro" id="IPR017945">
    <property type="entry name" value="DHBP_synth_RibB-like_a/b_dom"/>
</dbReference>
<dbReference type="InterPro" id="IPR000422">
    <property type="entry name" value="DHBP_synthase_RibB"/>
</dbReference>
<dbReference type="InterPro" id="IPR032677">
    <property type="entry name" value="GTP_cyclohydro_II"/>
</dbReference>
<dbReference type="InterPro" id="IPR000926">
    <property type="entry name" value="RibA"/>
</dbReference>
<dbReference type="InterPro" id="IPR036144">
    <property type="entry name" value="RibA-like_sf"/>
</dbReference>
<dbReference type="InterPro" id="IPR016299">
    <property type="entry name" value="Riboflavin_synth_RibBA"/>
</dbReference>
<dbReference type="NCBIfam" id="NF001591">
    <property type="entry name" value="PRK00393.1"/>
    <property type="match status" value="1"/>
</dbReference>
<dbReference type="NCBIfam" id="NF006803">
    <property type="entry name" value="PRK09311.1"/>
    <property type="match status" value="1"/>
</dbReference>
<dbReference type="NCBIfam" id="TIGR00505">
    <property type="entry name" value="ribA"/>
    <property type="match status" value="1"/>
</dbReference>
<dbReference type="NCBIfam" id="TIGR00506">
    <property type="entry name" value="ribB"/>
    <property type="match status" value="1"/>
</dbReference>
<dbReference type="PANTHER" id="PTHR21327:SF18">
    <property type="entry name" value="3,4-DIHYDROXY-2-BUTANONE 4-PHOSPHATE SYNTHASE"/>
    <property type="match status" value="1"/>
</dbReference>
<dbReference type="PANTHER" id="PTHR21327">
    <property type="entry name" value="GTP CYCLOHYDROLASE II-RELATED"/>
    <property type="match status" value="1"/>
</dbReference>
<dbReference type="Pfam" id="PF00926">
    <property type="entry name" value="DHBP_synthase"/>
    <property type="match status" value="1"/>
</dbReference>
<dbReference type="Pfam" id="PF00925">
    <property type="entry name" value="GTP_cyclohydro2"/>
    <property type="match status" value="1"/>
</dbReference>
<dbReference type="PIRSF" id="PIRSF001259">
    <property type="entry name" value="RibA"/>
    <property type="match status" value="1"/>
</dbReference>
<dbReference type="SUPFAM" id="SSF142695">
    <property type="entry name" value="RibA-like"/>
    <property type="match status" value="1"/>
</dbReference>
<dbReference type="SUPFAM" id="SSF55821">
    <property type="entry name" value="YrdC/RibB"/>
    <property type="match status" value="1"/>
</dbReference>
<sequence length="401" mass="44726">MTDFQFSKVEDAIEAIRQGKIILVTDDEDRENEGDFICAAEFATPENINFMATYGKGLICTPISTEIAKKLNFHPMVAVNQDNHETAFTVSVDHIDTGTGISAFERSITAMKIVDDNAKATDFRRPGHMFPLIAKDGGVLVRNGHTEATVDLARLAGLKHAGLCCEIMADDGTMMTMPDLQKFAVEHNMPFITIQQLQEYRRKHDSLVKQISVVKMPTKYGEFMAHSFVEVISGKEHVALVKGDLTDGEQVLARIHSECLTGDAFGSQRCDCGQQFAAAMTQIEQEGRGVILYLRQEGRGIGLINKLRAYELQDKGMDTVEANVALGFKEDEREYYIGAQMFQQLGVKSIRLLTNNPAKIEGLKEQGLNIVAREPIIVEPNKNDIDYLKVKQIKMGHMFNF</sequence>
<reference key="1">
    <citation type="submission" date="2008-06" db="EMBL/GenBank/DDBJ databases">
        <title>Genome and proteome analysis of A. pleuropneumoniae serotype 7.</title>
        <authorList>
            <person name="Linke B."/>
            <person name="Buettner F."/>
            <person name="Martinez-Arias R."/>
            <person name="Goesmann A."/>
            <person name="Baltes N."/>
            <person name="Tegetmeyer H."/>
            <person name="Singh M."/>
            <person name="Gerlach G.F."/>
        </authorList>
    </citation>
    <scope>NUCLEOTIDE SEQUENCE [LARGE SCALE GENOMIC DNA]</scope>
    <source>
        <strain>AP76</strain>
    </source>
</reference>
<name>RIBBA_ACTP7</name>
<evidence type="ECO:0000255" key="1">
    <source>
        <dbReference type="HAMAP-Rule" id="MF_01283"/>
    </source>
</evidence>
<accession>B3H0P8</accession>
<organism>
    <name type="scientific">Actinobacillus pleuropneumoniae serotype 7 (strain AP76)</name>
    <dbReference type="NCBI Taxonomy" id="537457"/>
    <lineage>
        <taxon>Bacteria</taxon>
        <taxon>Pseudomonadati</taxon>
        <taxon>Pseudomonadota</taxon>
        <taxon>Gammaproteobacteria</taxon>
        <taxon>Pasteurellales</taxon>
        <taxon>Pasteurellaceae</taxon>
        <taxon>Actinobacillus</taxon>
    </lineage>
</organism>
<proteinExistence type="inferred from homology"/>